<sequence>MVNVLKGVLIECDPAMKQFLLYLDESNALGKKFIIQDIDDTHVFVIAELVNVLQERVGELMDQNAFSLTQK</sequence>
<gene>
    <name evidence="8" type="primary">GTF2H5</name>
    <name type="synonym">C6orf175</name>
    <name type="synonym">TTDA</name>
</gene>
<keyword id="KW-0002">3D-structure</keyword>
<keyword id="KW-0963">Cytoplasm</keyword>
<keyword id="KW-0225">Disease variant</keyword>
<keyword id="KW-0227">DNA damage</keyword>
<keyword id="KW-0234">DNA repair</keyword>
<keyword id="KW-0977">Ichthyosis</keyword>
<keyword id="KW-0539">Nucleus</keyword>
<keyword id="KW-0597">Phosphoprotein</keyword>
<keyword id="KW-1267">Proteomics identification</keyword>
<keyword id="KW-1185">Reference proteome</keyword>
<keyword id="KW-0804">Transcription</keyword>
<keyword id="KW-0805">Transcription regulation</keyword>
<organism>
    <name type="scientific">Homo sapiens</name>
    <name type="common">Human</name>
    <dbReference type="NCBI Taxonomy" id="9606"/>
    <lineage>
        <taxon>Eukaryota</taxon>
        <taxon>Metazoa</taxon>
        <taxon>Chordata</taxon>
        <taxon>Craniata</taxon>
        <taxon>Vertebrata</taxon>
        <taxon>Euteleostomi</taxon>
        <taxon>Mammalia</taxon>
        <taxon>Eutheria</taxon>
        <taxon>Euarchontoglires</taxon>
        <taxon>Primates</taxon>
        <taxon>Haplorrhini</taxon>
        <taxon>Catarrhini</taxon>
        <taxon>Hominidae</taxon>
        <taxon>Homo</taxon>
    </lineage>
</organism>
<comment type="function">
    <text evidence="2 3">Component of the general transcription and DNA repair factor IIH (TFIIH) core complex, which is involved in general and transcription-coupled nucleotide excision repair (NER) of damaged DNA and, when complexed to CAK, in RNA transcription by RNA polymerase II. In NER, TFIIH acts by opening DNA around the lesion to allow the excision of the damaged oligonucleotide and its replacement by a new DNA fragment. In transcription, TFIIH has an essential role in transcription initiation. When the pre-initiation complex (PIC) has been established, TFIIH is required for promoter opening and promoter escape. Phosphorylation of the C-terminal tail (CTD) of the largest subunit of RNA polymerase II by the kinase module CAK controls the initiation of transcription. Necessary for the stability of the TFIIH complex and for the presence of normal levels of TFIIH in the cell.</text>
</comment>
<comment type="subunit">
    <text evidence="2 3 4">Component of the 7-subunit TFIIH core complex composed of XPB/ERCC3, XPD/ERCC2, GTF2H1, GTF2H2, GTF2H3, GTF2H4 and GTF2H5, which is active in NER. The core complex associates with the 3-subunit CDK-activating kinase (CAK) module composed of CCNH/cyclin H, CDK7 and MNAT1 to form the 10-subunit holoenzyme (holo-TFIIH) active in transcription (PubMed:15220921). Part of TBP-based Pol II pre-initiation complex (PIC), in which Pol II core assembles with general transcription factors and other specific initiation factors including GTF2E1, GTF2E2, GTF2F1, GTF2F2, TCEA1, ERCC2, ERCC3, GTF2H2, GTF2H3, GTF2H4, GTF2H5, GTF2A1, GTF2A2, GTF2B and TBP; this large multi-subunit PIC complex mediates DNA unwinding and targets Pol II core to the transcription start site where the first phosphodiester bond forms (PubMed:27193682).</text>
</comment>
<comment type="interaction">
    <interactant intactId="EBI-6380438">
        <id>Q6ZYL4</id>
    </interactant>
    <interactant intactId="EBI-712648">
        <id>O95994</id>
        <label>AGR2</label>
    </interactant>
    <organismsDiffer>false</organismsDiffer>
    <experiments>3</experiments>
</comment>
<comment type="interaction">
    <interactant intactId="EBI-6380438">
        <id>Q6ZYL4</id>
    </interactant>
    <interactant intactId="EBI-17439331">
        <id>Q8N6D5</id>
        <label>ANKRD29</label>
    </interactant>
    <organismsDiffer>false</organismsDiffer>
    <experiments>3</experiments>
</comment>
<comment type="interaction">
    <interactant intactId="EBI-6380438">
        <id>Q6ZYL4</id>
    </interactant>
    <interactant intactId="EBI-742054">
        <id>Q96D03</id>
        <label>DDIT4L</label>
    </interactant>
    <organismsDiffer>false</organismsDiffer>
    <experiments>3</experiments>
</comment>
<comment type="interaction">
    <interactant intactId="EBI-6380438">
        <id>Q6ZYL4</id>
    </interactant>
    <interactant intactId="EBI-1183307">
        <id>P19447</id>
        <label>ERCC3</label>
    </interactant>
    <organismsDiffer>false</organismsDiffer>
    <experiments>6</experiments>
</comment>
<comment type="interaction">
    <interactant intactId="EBI-6380438">
        <id>Q6ZYL4</id>
    </interactant>
    <interactant intactId="EBI-19954058">
        <id>O15499</id>
        <label>GSC2</label>
    </interactant>
    <organismsDiffer>false</organismsDiffer>
    <experiments>3</experiments>
</comment>
<comment type="interaction">
    <interactant intactId="EBI-6380438">
        <id>Q6ZYL4</id>
    </interactant>
    <interactant intactId="EBI-1565170">
        <id>Q13888</id>
        <label>GTF2H2</label>
    </interactant>
    <organismsDiffer>false</organismsDiffer>
    <experiments>6</experiments>
</comment>
<comment type="interaction">
    <interactant intactId="EBI-6380438">
        <id>Q6ZYL4</id>
    </interactant>
    <interactant intactId="EBI-6380495">
        <id>Q92759</id>
        <label>GTF2H4</label>
    </interactant>
    <organismsDiffer>false</organismsDiffer>
    <experiments>12</experiments>
</comment>
<comment type="interaction">
    <interactant intactId="EBI-6380438">
        <id>Q6ZYL4</id>
    </interactant>
    <interactant intactId="EBI-6509505">
        <id>Q0VD86</id>
        <label>INCA1</label>
    </interactant>
    <organismsDiffer>false</organismsDiffer>
    <experiments>3</experiments>
</comment>
<comment type="interaction">
    <interactant intactId="EBI-6380438">
        <id>Q6ZYL4</id>
    </interactant>
    <interactant intactId="EBI-2683432">
        <id>Q9NPE2</id>
        <label>NGRN</label>
    </interactant>
    <organismsDiffer>false</organismsDiffer>
    <experiments>3</experiments>
</comment>
<comment type="subcellular location">
    <subcellularLocation>
        <location evidence="3">Nucleus</location>
    </subcellularLocation>
    <subcellularLocation>
        <location evidence="1">Cytoplasm</location>
    </subcellularLocation>
</comment>
<comment type="disease" evidence="3">
    <disease id="DI-04434">
        <name>Trichothiodystrophy 3, photosensitive</name>
        <acronym>TTD3</acronym>
        <description>A form of trichothiodystrophy, an autosomal recessive disease characterized by sulfur-deficient brittle hair and multisystem variable abnormalities. The spectrum of clinical features varies from mild disease with only hair involvement to severe disease with cutaneous, neurologic and profound developmental defects. Ichthyosis, intellectual and developmental disabilities, decreased fertility, abnormal characteristics at birth, ocular abnormalities, short stature, and infections are common manifestations. There are both photosensitive and non-photosensitive forms of the disorder.</description>
        <dbReference type="MIM" id="616395"/>
    </disease>
    <text>The disease is caused by variants affecting the gene represented in this entry.</text>
</comment>
<comment type="similarity">
    <text evidence="6">Belongs to the TFB5 family.</text>
</comment>
<name>TF2H5_HUMAN</name>
<evidence type="ECO:0000250" key="1">
    <source>
        <dbReference type="UniProtKB" id="Q8K2X8"/>
    </source>
</evidence>
<evidence type="ECO:0000269" key="2">
    <source>
    </source>
</evidence>
<evidence type="ECO:0000269" key="3">
    <source>
    </source>
</evidence>
<evidence type="ECO:0000269" key="4">
    <source>
    </source>
</evidence>
<evidence type="ECO:0000303" key="5">
    <source>
    </source>
</evidence>
<evidence type="ECO:0000305" key="6"/>
<evidence type="ECO:0000305" key="7">
    <source>
    </source>
</evidence>
<evidence type="ECO:0000312" key="8">
    <source>
        <dbReference type="HGNC" id="HGNC:21157"/>
    </source>
</evidence>
<evidence type="ECO:0007744" key="9">
    <source>
        <dbReference type="PDB" id="6RO4"/>
    </source>
</evidence>
<evidence type="ECO:0007744" key="10">
    <source>
        <dbReference type="PDB" id="7NVV"/>
    </source>
</evidence>
<evidence type="ECO:0007744" key="11">
    <source>
        <dbReference type="PDB" id="7NVW"/>
    </source>
</evidence>
<evidence type="ECO:0007744" key="12">
    <source>
        <dbReference type="PDB" id="7NVX"/>
    </source>
</evidence>
<evidence type="ECO:0007744" key="13">
    <source>
        <dbReference type="PDB" id="7NVY"/>
    </source>
</evidence>
<evidence type="ECO:0007744" key="14">
    <source>
        <dbReference type="PDB" id="7NVZ"/>
    </source>
</evidence>
<evidence type="ECO:0007744" key="15">
    <source>
        <dbReference type="PDB" id="7NW0"/>
    </source>
</evidence>
<evidence type="ECO:0007744" key="16">
    <source>
    </source>
</evidence>
<evidence type="ECO:0007829" key="17">
    <source>
        <dbReference type="PDB" id="1YDL"/>
    </source>
</evidence>
<evidence type="ECO:0007829" key="18">
    <source>
        <dbReference type="PDB" id="2JNJ"/>
    </source>
</evidence>
<dbReference type="EMBL" id="AJ634743">
    <property type="protein sequence ID" value="CAG25512.1"/>
    <property type="molecule type" value="mRNA"/>
</dbReference>
<dbReference type="EMBL" id="AL590703">
    <property type="status" value="NOT_ANNOTATED_CDS"/>
    <property type="molecule type" value="Genomic_DNA"/>
</dbReference>
<dbReference type="EMBL" id="BC056906">
    <property type="protein sequence ID" value="AAH56906.1"/>
    <property type="molecule type" value="mRNA"/>
</dbReference>
<dbReference type="EMBL" id="BC060317">
    <property type="protein sequence ID" value="AAH60317.1"/>
    <property type="molecule type" value="mRNA"/>
</dbReference>
<dbReference type="CCDS" id="CCDS5256.1"/>
<dbReference type="RefSeq" id="NP_997001.1">
    <property type="nucleotide sequence ID" value="NM_207118.3"/>
</dbReference>
<dbReference type="PDB" id="1YDL">
    <property type="method" value="X-ray"/>
    <property type="resolution" value="2.30 A"/>
    <property type="chains" value="A=3-71"/>
</dbReference>
<dbReference type="PDB" id="2JNJ">
    <property type="method" value="NMR"/>
    <property type="chains" value="A/B=1-71"/>
</dbReference>
<dbReference type="PDB" id="5IVW">
    <property type="method" value="EM"/>
    <property type="resolution" value="10.00 A"/>
    <property type="chains" value="1=1-71"/>
</dbReference>
<dbReference type="PDB" id="5IY6">
    <property type="method" value="EM"/>
    <property type="resolution" value="7.20 A"/>
    <property type="chains" value="1=1-71"/>
</dbReference>
<dbReference type="PDB" id="5IY7">
    <property type="method" value="EM"/>
    <property type="resolution" value="8.60 A"/>
    <property type="chains" value="1=1-71"/>
</dbReference>
<dbReference type="PDB" id="5IY8">
    <property type="method" value="EM"/>
    <property type="resolution" value="7.90 A"/>
    <property type="chains" value="1=1-71"/>
</dbReference>
<dbReference type="PDB" id="5IY9">
    <property type="method" value="EM"/>
    <property type="resolution" value="6.30 A"/>
    <property type="chains" value="1=1-71"/>
</dbReference>
<dbReference type="PDB" id="5OF4">
    <property type="method" value="EM"/>
    <property type="resolution" value="4.40 A"/>
    <property type="chains" value="G=1-71"/>
</dbReference>
<dbReference type="PDB" id="6NMI">
    <property type="method" value="EM"/>
    <property type="resolution" value="3.70 A"/>
    <property type="chains" value="G=1-71"/>
</dbReference>
<dbReference type="PDB" id="6O9L">
    <property type="method" value="EM"/>
    <property type="resolution" value="7.20 A"/>
    <property type="chains" value="5=1-71"/>
</dbReference>
<dbReference type="PDB" id="6O9M">
    <property type="method" value="EM"/>
    <property type="resolution" value="4.40 A"/>
    <property type="chains" value="5=1-71"/>
</dbReference>
<dbReference type="PDB" id="6RO4">
    <property type="method" value="EM"/>
    <property type="resolution" value="3.50 A"/>
    <property type="chains" value="F=1-71"/>
</dbReference>
<dbReference type="PDB" id="7AD8">
    <property type="method" value="EM"/>
    <property type="resolution" value="3.50 A"/>
    <property type="chains" value="F=1-71"/>
</dbReference>
<dbReference type="PDB" id="7EGB">
    <property type="method" value="EM"/>
    <property type="resolution" value="3.30 A"/>
    <property type="chains" value="5=1-71"/>
</dbReference>
<dbReference type="PDB" id="7EGC">
    <property type="method" value="EM"/>
    <property type="resolution" value="3.90 A"/>
    <property type="chains" value="5=1-71"/>
</dbReference>
<dbReference type="PDB" id="7ENA">
    <property type="method" value="EM"/>
    <property type="resolution" value="4.07 A"/>
    <property type="chains" value="5=1-71"/>
</dbReference>
<dbReference type="PDB" id="7ENC">
    <property type="method" value="EM"/>
    <property type="resolution" value="4.13 A"/>
    <property type="chains" value="5=1-71"/>
</dbReference>
<dbReference type="PDB" id="7LBM">
    <property type="method" value="EM"/>
    <property type="resolution" value="4.80 A"/>
    <property type="chains" value="c=1-71"/>
</dbReference>
<dbReference type="PDB" id="7NVR">
    <property type="method" value="EM"/>
    <property type="resolution" value="4.50 A"/>
    <property type="chains" value="5=1-71"/>
</dbReference>
<dbReference type="PDB" id="7NVV">
    <property type="method" value="EM"/>
    <property type="resolution" value="2.90 A"/>
    <property type="chains" value="5=1-71"/>
</dbReference>
<dbReference type="PDB" id="7NVW">
    <property type="method" value="EM"/>
    <property type="resolution" value="4.30 A"/>
    <property type="chains" value="5=1-71"/>
</dbReference>
<dbReference type="PDB" id="7NVX">
    <property type="method" value="EM"/>
    <property type="resolution" value="3.90 A"/>
    <property type="chains" value="5=1-71"/>
</dbReference>
<dbReference type="PDB" id="7NVY">
    <property type="method" value="EM"/>
    <property type="resolution" value="7.30 A"/>
    <property type="chains" value="5=1-71"/>
</dbReference>
<dbReference type="PDB" id="7NVZ">
    <property type="method" value="EM"/>
    <property type="resolution" value="7.20 A"/>
    <property type="chains" value="5=1-71"/>
</dbReference>
<dbReference type="PDB" id="7NW0">
    <property type="method" value="EM"/>
    <property type="resolution" value="6.60 A"/>
    <property type="chains" value="5=1-71"/>
</dbReference>
<dbReference type="PDB" id="8BVW">
    <property type="method" value="EM"/>
    <property type="resolution" value="4.00 A"/>
    <property type="chains" value="6=1-71"/>
</dbReference>
<dbReference type="PDB" id="8BYQ">
    <property type="method" value="EM"/>
    <property type="resolution" value="4.10 A"/>
    <property type="chains" value="6=1-71"/>
</dbReference>
<dbReference type="PDB" id="8EBS">
    <property type="method" value="EM"/>
    <property type="resolution" value="4.00 A"/>
    <property type="chains" value="G=1-71"/>
</dbReference>
<dbReference type="PDB" id="8EBT">
    <property type="method" value="EM"/>
    <property type="resolution" value="3.90 A"/>
    <property type="chains" value="G=4-69"/>
</dbReference>
<dbReference type="PDB" id="8EBU">
    <property type="method" value="EM"/>
    <property type="resolution" value="3.30 A"/>
    <property type="chains" value="G=1-71"/>
</dbReference>
<dbReference type="PDB" id="8EBV">
    <property type="method" value="EM"/>
    <property type="resolution" value="7.10 A"/>
    <property type="chains" value="G=1-71"/>
</dbReference>
<dbReference type="PDB" id="8EBW">
    <property type="method" value="EM"/>
    <property type="resolution" value="5.60 A"/>
    <property type="chains" value="G=1-71"/>
</dbReference>
<dbReference type="PDB" id="8EBX">
    <property type="method" value="EM"/>
    <property type="resolution" value="3.60 A"/>
    <property type="chains" value="G=1-71"/>
</dbReference>
<dbReference type="PDB" id="8EBY">
    <property type="method" value="EM"/>
    <property type="resolution" value="3.60 A"/>
    <property type="chains" value="G=1-71"/>
</dbReference>
<dbReference type="PDB" id="8GXQ">
    <property type="method" value="EM"/>
    <property type="resolution" value="5.04 A"/>
    <property type="chains" value="HF=1-71"/>
</dbReference>
<dbReference type="PDB" id="8GXS">
    <property type="method" value="EM"/>
    <property type="resolution" value="4.16 A"/>
    <property type="chains" value="HF=1-71"/>
</dbReference>
<dbReference type="PDB" id="8WAK">
    <property type="method" value="EM"/>
    <property type="resolution" value="5.47 A"/>
    <property type="chains" value="5=1-71"/>
</dbReference>
<dbReference type="PDB" id="8WAL">
    <property type="method" value="EM"/>
    <property type="resolution" value="8.52 A"/>
    <property type="chains" value="5=1-71"/>
</dbReference>
<dbReference type="PDB" id="8WAN">
    <property type="method" value="EM"/>
    <property type="resolution" value="6.07 A"/>
    <property type="chains" value="5=1-71"/>
</dbReference>
<dbReference type="PDB" id="8WAO">
    <property type="method" value="EM"/>
    <property type="resolution" value="6.40 A"/>
    <property type="chains" value="5=1-71"/>
</dbReference>
<dbReference type="PDB" id="8WAP">
    <property type="method" value="EM"/>
    <property type="resolution" value="5.85 A"/>
    <property type="chains" value="5=1-71"/>
</dbReference>
<dbReference type="PDB" id="8WAQ">
    <property type="method" value="EM"/>
    <property type="resolution" value="6.29 A"/>
    <property type="chains" value="5=1-71"/>
</dbReference>
<dbReference type="PDB" id="8WAR">
    <property type="method" value="EM"/>
    <property type="resolution" value="7.20 A"/>
    <property type="chains" value="5=1-71"/>
</dbReference>
<dbReference type="PDB" id="8WAS">
    <property type="method" value="EM"/>
    <property type="resolution" value="6.13 A"/>
    <property type="chains" value="5=1-71"/>
</dbReference>
<dbReference type="PDBsum" id="1YDL"/>
<dbReference type="PDBsum" id="2JNJ"/>
<dbReference type="PDBsum" id="5IVW"/>
<dbReference type="PDBsum" id="5IY6"/>
<dbReference type="PDBsum" id="5IY7"/>
<dbReference type="PDBsum" id="5IY8"/>
<dbReference type="PDBsum" id="5IY9"/>
<dbReference type="PDBsum" id="5OF4"/>
<dbReference type="PDBsum" id="6NMI"/>
<dbReference type="PDBsum" id="6O9L"/>
<dbReference type="PDBsum" id="6O9M"/>
<dbReference type="PDBsum" id="6RO4"/>
<dbReference type="PDBsum" id="7AD8"/>
<dbReference type="PDBsum" id="7EGB"/>
<dbReference type="PDBsum" id="7EGC"/>
<dbReference type="PDBsum" id="7ENA"/>
<dbReference type="PDBsum" id="7ENC"/>
<dbReference type="PDBsum" id="7LBM"/>
<dbReference type="PDBsum" id="7NVR"/>
<dbReference type="PDBsum" id="7NVV"/>
<dbReference type="PDBsum" id="7NVW"/>
<dbReference type="PDBsum" id="7NVX"/>
<dbReference type="PDBsum" id="7NVY"/>
<dbReference type="PDBsum" id="7NVZ"/>
<dbReference type="PDBsum" id="7NW0"/>
<dbReference type="PDBsum" id="8BVW"/>
<dbReference type="PDBsum" id="8BYQ"/>
<dbReference type="PDBsum" id="8EBS"/>
<dbReference type="PDBsum" id="8EBT"/>
<dbReference type="PDBsum" id="8EBU"/>
<dbReference type="PDBsum" id="8EBV"/>
<dbReference type="PDBsum" id="8EBW"/>
<dbReference type="PDBsum" id="8EBX"/>
<dbReference type="PDBsum" id="8EBY"/>
<dbReference type="PDBsum" id="8GXQ"/>
<dbReference type="PDBsum" id="8GXS"/>
<dbReference type="PDBsum" id="8WAK"/>
<dbReference type="PDBsum" id="8WAL"/>
<dbReference type="PDBsum" id="8WAN"/>
<dbReference type="PDBsum" id="8WAO"/>
<dbReference type="PDBsum" id="8WAP"/>
<dbReference type="PDBsum" id="8WAQ"/>
<dbReference type="PDBsum" id="8WAR"/>
<dbReference type="PDBsum" id="8WAS"/>
<dbReference type="EMDB" id="EMD-0452"/>
<dbReference type="EMDB" id="EMD-12610"/>
<dbReference type="EMDB" id="EMD-12614"/>
<dbReference type="EMDB" id="EMD-12615"/>
<dbReference type="EMDB" id="EMD-12616"/>
<dbReference type="EMDB" id="EMD-12617"/>
<dbReference type="EMDB" id="EMD-12618"/>
<dbReference type="EMDB" id="EMD-12619"/>
<dbReference type="EMDB" id="EMD-16274"/>
<dbReference type="EMDB" id="EMD-16331"/>
<dbReference type="EMDB" id="EMD-23255"/>
<dbReference type="EMDB" id="EMD-27996"/>
<dbReference type="EMDB" id="EMD-27997"/>
<dbReference type="EMDB" id="EMD-27998"/>
<dbReference type="EMDB" id="EMD-27999"/>
<dbReference type="EMDB" id="EMD-28000"/>
<dbReference type="EMDB" id="EMD-28001"/>
<dbReference type="EMDB" id="EMD-28002"/>
<dbReference type="EMDB" id="EMD-29673"/>
<dbReference type="EMDB" id="EMD-29674"/>
<dbReference type="EMDB" id="EMD-31111"/>
<dbReference type="EMDB" id="EMD-31112"/>
<dbReference type="EMDB" id="EMD-31204"/>
<dbReference type="EMDB" id="EMD-31207"/>
<dbReference type="EMDB" id="EMD-34359"/>
<dbReference type="EMDB" id="EMD-34360"/>
<dbReference type="EMDB" id="EMD-37395"/>
<dbReference type="EMDB" id="EMD-37396"/>
<dbReference type="EMDB" id="EMD-37398"/>
<dbReference type="EMDB" id="EMD-37399"/>
<dbReference type="EMDB" id="EMD-37400"/>
<dbReference type="EMDB" id="EMD-37401"/>
<dbReference type="EMDB" id="EMD-37402"/>
<dbReference type="EMDB" id="EMD-37403"/>
<dbReference type="EMDB" id="EMD-3802"/>
<dbReference type="EMDB" id="EMD-4970"/>
<dbReference type="EMDB" id="EMD-8131"/>
<dbReference type="EMDB" id="EMD-8132"/>
<dbReference type="EMDB" id="EMD-8133"/>
<dbReference type="EMDB" id="EMD-8134"/>
<dbReference type="SMR" id="Q6ZYL4"/>
<dbReference type="BioGRID" id="135676">
    <property type="interactions" value="34"/>
</dbReference>
<dbReference type="ComplexPortal" id="CPX-2395">
    <property type="entry name" value="General transcription factor TFIIH complex"/>
</dbReference>
<dbReference type="CORUM" id="Q6ZYL4"/>
<dbReference type="DIP" id="DIP-29188N"/>
<dbReference type="FunCoup" id="Q6ZYL4">
    <property type="interactions" value="908"/>
</dbReference>
<dbReference type="IntAct" id="Q6ZYL4">
    <property type="interactions" value="28"/>
</dbReference>
<dbReference type="MINT" id="Q6ZYL4"/>
<dbReference type="STRING" id="9606.ENSP00000476100"/>
<dbReference type="iPTMnet" id="Q6ZYL4"/>
<dbReference type="MetOSite" id="Q6ZYL4"/>
<dbReference type="PhosphoSitePlus" id="Q6ZYL4"/>
<dbReference type="SwissPalm" id="Q6ZYL4"/>
<dbReference type="BioMuta" id="GTF2H5"/>
<dbReference type="DMDM" id="67462047"/>
<dbReference type="jPOST" id="Q6ZYL4"/>
<dbReference type="MassIVE" id="Q6ZYL4"/>
<dbReference type="PaxDb" id="9606-ENSP00000476100"/>
<dbReference type="PeptideAtlas" id="Q6ZYL4"/>
<dbReference type="ProteomicsDB" id="68501"/>
<dbReference type="Pumba" id="Q6ZYL4"/>
<dbReference type="TopDownProteomics" id="Q6ZYL4"/>
<dbReference type="Antibodypedia" id="70683">
    <property type="antibodies" value="86 antibodies from 18 providers"/>
</dbReference>
<dbReference type="DNASU" id="404672"/>
<dbReference type="Ensembl" id="ENST00000607778.2">
    <property type="protein sequence ID" value="ENSP00000476100.1"/>
    <property type="gene ID" value="ENSG00000272047.4"/>
</dbReference>
<dbReference type="Ensembl" id="ENST00000689809.1">
    <property type="protein sequence ID" value="ENSP00000510752.1"/>
    <property type="gene ID" value="ENSG00000272047.4"/>
</dbReference>
<dbReference type="Ensembl" id="ENST00000691867.1">
    <property type="protein sequence ID" value="ENSP00000510706.1"/>
    <property type="gene ID" value="ENSG00000272047.4"/>
</dbReference>
<dbReference type="GeneID" id="404672"/>
<dbReference type="KEGG" id="hsa:404672"/>
<dbReference type="MANE-Select" id="ENST00000607778.2">
    <property type="protein sequence ID" value="ENSP00000476100.1"/>
    <property type="RefSeq nucleotide sequence ID" value="NM_207118.3"/>
    <property type="RefSeq protein sequence ID" value="NP_997001.1"/>
</dbReference>
<dbReference type="UCSC" id="uc003qrd.4">
    <property type="organism name" value="human"/>
</dbReference>
<dbReference type="AGR" id="HGNC:21157"/>
<dbReference type="CTD" id="404672"/>
<dbReference type="DisGeNET" id="404672"/>
<dbReference type="GeneCards" id="GTF2H5"/>
<dbReference type="HGNC" id="HGNC:21157">
    <property type="gene designation" value="GTF2H5"/>
</dbReference>
<dbReference type="HPA" id="ENSG00000272047">
    <property type="expression patterns" value="Low tissue specificity"/>
</dbReference>
<dbReference type="MalaCards" id="GTF2H5"/>
<dbReference type="MIM" id="608780">
    <property type="type" value="gene"/>
</dbReference>
<dbReference type="MIM" id="616395">
    <property type="type" value="phenotype"/>
</dbReference>
<dbReference type="neXtProt" id="NX_Q6ZYL4"/>
<dbReference type="OpenTargets" id="ENSG00000272047"/>
<dbReference type="Orphanet" id="33364">
    <property type="disease" value="Trichothiodystrophy"/>
</dbReference>
<dbReference type="PharmGKB" id="PA134962077"/>
<dbReference type="VEuPathDB" id="HostDB:ENSG00000272047"/>
<dbReference type="eggNOG" id="KOG3451">
    <property type="taxonomic scope" value="Eukaryota"/>
</dbReference>
<dbReference type="GeneTree" id="ENSGT00390000004028"/>
<dbReference type="HOGENOM" id="CLU_166246_4_0_1"/>
<dbReference type="InParanoid" id="Q6ZYL4"/>
<dbReference type="OMA" id="VKCDPAM"/>
<dbReference type="OrthoDB" id="354at2759"/>
<dbReference type="PAN-GO" id="Q6ZYL4">
    <property type="GO annotations" value="5 GO annotations based on evolutionary models"/>
</dbReference>
<dbReference type="PhylomeDB" id="Q6ZYL4"/>
<dbReference type="TreeFam" id="TF319487"/>
<dbReference type="PathwayCommons" id="Q6ZYL4"/>
<dbReference type="Reactome" id="R-HSA-112382">
    <property type="pathway name" value="Formation of RNA Pol II elongation complex"/>
</dbReference>
<dbReference type="Reactome" id="R-HSA-113418">
    <property type="pathway name" value="Formation of the Early Elongation Complex"/>
</dbReference>
<dbReference type="Reactome" id="R-HSA-167152">
    <property type="pathway name" value="Formation of HIV elongation complex in the absence of HIV Tat"/>
</dbReference>
<dbReference type="Reactome" id="R-HSA-167158">
    <property type="pathway name" value="Formation of the HIV-1 Early Elongation Complex"/>
</dbReference>
<dbReference type="Reactome" id="R-HSA-167160">
    <property type="pathway name" value="RNA Pol II CTD phosphorylation and interaction with CE during HIV infection"/>
</dbReference>
<dbReference type="Reactome" id="R-HSA-167161">
    <property type="pathway name" value="HIV Transcription Initiation"/>
</dbReference>
<dbReference type="Reactome" id="R-HSA-167162">
    <property type="pathway name" value="RNA Polymerase II HIV Promoter Escape"/>
</dbReference>
<dbReference type="Reactome" id="R-HSA-167172">
    <property type="pathway name" value="Transcription of the HIV genome"/>
</dbReference>
<dbReference type="Reactome" id="R-HSA-167200">
    <property type="pathway name" value="Formation of HIV-1 elongation complex containing HIV-1 Tat"/>
</dbReference>
<dbReference type="Reactome" id="R-HSA-167246">
    <property type="pathway name" value="Tat-mediated elongation of the HIV-1 transcript"/>
</dbReference>
<dbReference type="Reactome" id="R-HSA-427413">
    <property type="pathway name" value="NoRC negatively regulates rRNA expression"/>
</dbReference>
<dbReference type="Reactome" id="R-HSA-5696395">
    <property type="pathway name" value="Formation of Incision Complex in GG-NER"/>
</dbReference>
<dbReference type="Reactome" id="R-HSA-5696400">
    <property type="pathway name" value="Dual Incision in GG-NER"/>
</dbReference>
<dbReference type="Reactome" id="R-HSA-674695">
    <property type="pathway name" value="RNA Polymerase II Pre-transcription Events"/>
</dbReference>
<dbReference type="Reactome" id="R-HSA-6781823">
    <property type="pathway name" value="Formation of TC-NER Pre-Incision Complex"/>
</dbReference>
<dbReference type="Reactome" id="R-HSA-6781827">
    <property type="pathway name" value="Transcription-Coupled Nucleotide Excision Repair (TC-NER)"/>
</dbReference>
<dbReference type="Reactome" id="R-HSA-6782135">
    <property type="pathway name" value="Dual incision in TC-NER"/>
</dbReference>
<dbReference type="Reactome" id="R-HSA-6782210">
    <property type="pathway name" value="Gap-filling DNA repair synthesis and ligation in TC-NER"/>
</dbReference>
<dbReference type="Reactome" id="R-HSA-6796648">
    <property type="pathway name" value="TP53 Regulates Transcription of DNA Repair Genes"/>
</dbReference>
<dbReference type="Reactome" id="R-HSA-72086">
    <property type="pathway name" value="mRNA Capping"/>
</dbReference>
<dbReference type="Reactome" id="R-HSA-73762">
    <property type="pathway name" value="RNA Polymerase I Transcription Initiation"/>
</dbReference>
<dbReference type="Reactome" id="R-HSA-73772">
    <property type="pathway name" value="RNA Polymerase I Promoter Escape"/>
</dbReference>
<dbReference type="Reactome" id="R-HSA-73776">
    <property type="pathway name" value="RNA Polymerase II Promoter Escape"/>
</dbReference>
<dbReference type="Reactome" id="R-HSA-73779">
    <property type="pathway name" value="RNA Polymerase II Transcription Pre-Initiation And Promoter Opening"/>
</dbReference>
<dbReference type="Reactome" id="R-HSA-73863">
    <property type="pathway name" value="RNA Polymerase I Transcription Termination"/>
</dbReference>
<dbReference type="Reactome" id="R-HSA-75953">
    <property type="pathway name" value="RNA Polymerase II Transcription Initiation"/>
</dbReference>
<dbReference type="Reactome" id="R-HSA-75955">
    <property type="pathway name" value="RNA Polymerase II Transcription Elongation"/>
</dbReference>
<dbReference type="Reactome" id="R-HSA-76042">
    <property type="pathway name" value="RNA Polymerase II Transcription Initiation And Promoter Clearance"/>
</dbReference>
<dbReference type="Reactome" id="R-HSA-77075">
    <property type="pathway name" value="RNA Pol II CTD phosphorylation and interaction with CE"/>
</dbReference>
<dbReference type="SignaLink" id="Q6ZYL4"/>
<dbReference type="SIGNOR" id="Q6ZYL4"/>
<dbReference type="BioGRID-ORCS" id="404672">
    <property type="hits" value="74 hits in 1172 CRISPR screens"/>
</dbReference>
<dbReference type="ChiTaRS" id="GTF2H5">
    <property type="organism name" value="human"/>
</dbReference>
<dbReference type="EvolutionaryTrace" id="Q6ZYL4"/>
<dbReference type="GeneWiki" id="GTF2H5"/>
<dbReference type="GenomeRNAi" id="404672"/>
<dbReference type="Pharos" id="Q6ZYL4">
    <property type="development level" value="Tbio"/>
</dbReference>
<dbReference type="PRO" id="PR:Q6ZYL4"/>
<dbReference type="Proteomes" id="UP000005640">
    <property type="component" value="Chromosome 6"/>
</dbReference>
<dbReference type="RNAct" id="Q6ZYL4">
    <property type="molecule type" value="protein"/>
</dbReference>
<dbReference type="Bgee" id="ENSG00000272047">
    <property type="expression patterns" value="Expressed in renal medulla and 219 other cell types or tissues"/>
</dbReference>
<dbReference type="ExpressionAtlas" id="Q6ZYL4">
    <property type="expression patterns" value="baseline and differential"/>
</dbReference>
<dbReference type="GO" id="GO:0005737">
    <property type="term" value="C:cytoplasm"/>
    <property type="evidence" value="ECO:0007669"/>
    <property type="project" value="UniProtKB-SubCell"/>
</dbReference>
<dbReference type="GO" id="GO:0005730">
    <property type="term" value="C:nucleolus"/>
    <property type="evidence" value="ECO:0000314"/>
    <property type="project" value="MGI"/>
</dbReference>
<dbReference type="GO" id="GO:0005654">
    <property type="term" value="C:nucleoplasm"/>
    <property type="evidence" value="ECO:0000304"/>
    <property type="project" value="Reactome"/>
</dbReference>
<dbReference type="GO" id="GO:0005669">
    <property type="term" value="C:transcription factor TFIID complex"/>
    <property type="evidence" value="ECO:0000314"/>
    <property type="project" value="UniProtKB"/>
</dbReference>
<dbReference type="GO" id="GO:0000439">
    <property type="term" value="C:transcription factor TFIIH core complex"/>
    <property type="evidence" value="ECO:0000318"/>
    <property type="project" value="GO_Central"/>
</dbReference>
<dbReference type="GO" id="GO:0005675">
    <property type="term" value="C:transcription factor TFIIH holo complex"/>
    <property type="evidence" value="ECO:0000318"/>
    <property type="project" value="GO_Central"/>
</dbReference>
<dbReference type="GO" id="GO:0071480">
    <property type="term" value="P:cellular response to gamma radiation"/>
    <property type="evidence" value="ECO:0007669"/>
    <property type="project" value="Ensembl"/>
</dbReference>
<dbReference type="GO" id="GO:0000462">
    <property type="term" value="P:maturation of SSU-rRNA from tricistronic rRNA transcript (SSU-rRNA, 5.8S rRNA, LSU-rRNA)"/>
    <property type="evidence" value="ECO:0007669"/>
    <property type="project" value="Ensembl"/>
</dbReference>
<dbReference type="GO" id="GO:0006289">
    <property type="term" value="P:nucleotide-excision repair"/>
    <property type="evidence" value="ECO:0000315"/>
    <property type="project" value="MGI"/>
</dbReference>
<dbReference type="GO" id="GO:0006294">
    <property type="term" value="P:nucleotide-excision repair, preincision complex assembly"/>
    <property type="evidence" value="ECO:0000318"/>
    <property type="project" value="GO_Central"/>
</dbReference>
<dbReference type="GO" id="GO:0006366">
    <property type="term" value="P:transcription by RNA polymerase II"/>
    <property type="evidence" value="ECO:0000318"/>
    <property type="project" value="GO_Central"/>
</dbReference>
<dbReference type="GO" id="GO:0006362">
    <property type="term" value="P:transcription elongation by RNA polymerase I"/>
    <property type="evidence" value="ECO:0007669"/>
    <property type="project" value="Ensembl"/>
</dbReference>
<dbReference type="GO" id="GO:0006367">
    <property type="term" value="P:transcription initiation at RNA polymerase II promoter"/>
    <property type="evidence" value="ECO:0007669"/>
    <property type="project" value="InterPro"/>
</dbReference>
<dbReference type="FunFam" id="3.30.70.1220:FF:000001">
    <property type="entry name" value="General transcription factor IIH subunit 5"/>
    <property type="match status" value="1"/>
</dbReference>
<dbReference type="Gene3D" id="3.30.70.1220">
    <property type="entry name" value="TFB5-like"/>
    <property type="match status" value="1"/>
</dbReference>
<dbReference type="InterPro" id="IPR035935">
    <property type="entry name" value="TFB5-like_sf"/>
</dbReference>
<dbReference type="InterPro" id="IPR009400">
    <property type="entry name" value="TFIIH_TTDA/Tfb5"/>
</dbReference>
<dbReference type="PANTHER" id="PTHR28580">
    <property type="entry name" value="GENERAL TRANSCRIPTION FACTOR IIH SUBUNIT 5"/>
    <property type="match status" value="1"/>
</dbReference>
<dbReference type="PANTHER" id="PTHR28580:SF1">
    <property type="entry name" value="GENERAL TRANSCRIPTION FACTOR IIH SUBUNIT 5"/>
    <property type="match status" value="1"/>
</dbReference>
<dbReference type="Pfam" id="PF06331">
    <property type="entry name" value="Tfb5"/>
    <property type="match status" value="1"/>
</dbReference>
<dbReference type="SMART" id="SM01395">
    <property type="entry name" value="Tbf5"/>
    <property type="match status" value="1"/>
</dbReference>
<dbReference type="SUPFAM" id="SSF142897">
    <property type="entry name" value="TFB5-like"/>
    <property type="match status" value="1"/>
</dbReference>
<feature type="chain" id="PRO_0000119256" description="General transcription factor IIH subunit 5">
    <location>
        <begin position="1"/>
        <end position="71"/>
    </location>
</feature>
<feature type="modified residue" description="Phosphothreonine" evidence="16">
    <location>
        <position position="69"/>
    </location>
</feature>
<feature type="sequence variant" id="VAR_022647" description="In TTD3; dbSNP:rs121434365." evidence="3">
    <original>L</original>
    <variation>P</variation>
    <location>
        <position position="21"/>
    </location>
</feature>
<feature type="strand" evidence="17">
    <location>
        <begin position="8"/>
        <end position="11"/>
    </location>
</feature>
<feature type="helix" evidence="17">
    <location>
        <begin position="14"/>
        <end position="25"/>
    </location>
</feature>
<feature type="turn" evidence="17">
    <location>
        <begin position="26"/>
        <end position="29"/>
    </location>
</feature>
<feature type="strand" evidence="17">
    <location>
        <begin position="34"/>
        <end position="37"/>
    </location>
</feature>
<feature type="strand" evidence="17">
    <location>
        <begin position="39"/>
        <end position="45"/>
    </location>
</feature>
<feature type="helix" evidence="17">
    <location>
        <begin position="49"/>
        <end position="59"/>
    </location>
</feature>
<feature type="turn" evidence="18">
    <location>
        <begin position="60"/>
        <end position="62"/>
    </location>
</feature>
<feature type="turn" evidence="17">
    <location>
        <begin position="65"/>
        <end position="70"/>
    </location>
</feature>
<protein>
    <recommendedName>
        <fullName>General transcription factor IIH subunit 5</fullName>
    </recommendedName>
    <alternativeName>
        <fullName>General transcription factor IIH polypeptide 5</fullName>
    </alternativeName>
    <alternativeName>
        <fullName evidence="5">TFB5 ortholog</fullName>
    </alternativeName>
    <alternativeName>
        <fullName evidence="5">TFIIH basal transcription factor complex TTD-A subunit</fullName>
    </alternativeName>
    <alternativeName>
        <fullName evidence="7">TFIIH subunit p8</fullName>
    </alternativeName>
</protein>
<accession>Q6ZYL4</accession>
<accession>Q0P5V8</accession>
<proteinExistence type="evidence at protein level"/>
<reference key="1">
    <citation type="journal article" date="2004" name="Nat. Genet.">
        <title>A new, tenth subunit of TFIIH is responsible for the DNA repair syndrome trichothiodystrophy group A and stabilizes TFIIH.</title>
        <authorList>
            <person name="Giglia-Mari G."/>
            <person name="Coin F."/>
            <person name="Ranish J.A."/>
            <person name="Hoogstraten D."/>
            <person name="Theil A."/>
            <person name="Wijgers N."/>
            <person name="Jaspers N.G.J."/>
            <person name="Raams A."/>
            <person name="Argentini M."/>
            <person name="van der Spek P.J."/>
            <person name="Botta E."/>
            <person name="Stefanini M."/>
            <person name="Egly J.-M."/>
            <person name="Aebersold R."/>
            <person name="Hoeijmakers J.H.J."/>
            <person name="Vermeulen W."/>
        </authorList>
    </citation>
    <scope>NUCLEOTIDE SEQUENCE [MRNA]</scope>
    <scope>VARIANT TTD3 PRO-21</scope>
    <scope>IDENTIFICATION BY MASS SPECTROMETRY</scope>
    <scope>SUBCELLULAR LOCATION</scope>
    <scope>FUNCTION</scope>
    <scope>INTERACTION WITH THE TFIIH COMPLEX</scope>
    <scope>INVOLVEMENT IN TTD3</scope>
    <source>
        <tissue>Fibroblast</tissue>
    </source>
</reference>
<reference key="2">
    <citation type="journal article" date="2003" name="Nature">
        <title>The DNA sequence and analysis of human chromosome 6.</title>
        <authorList>
            <person name="Mungall A.J."/>
            <person name="Palmer S.A."/>
            <person name="Sims S.K."/>
            <person name="Edwards C.A."/>
            <person name="Ashurst J.L."/>
            <person name="Wilming L."/>
            <person name="Jones M.C."/>
            <person name="Horton R."/>
            <person name="Hunt S.E."/>
            <person name="Scott C.E."/>
            <person name="Gilbert J.G.R."/>
            <person name="Clamp M.E."/>
            <person name="Bethel G."/>
            <person name="Milne S."/>
            <person name="Ainscough R."/>
            <person name="Almeida J.P."/>
            <person name="Ambrose K.D."/>
            <person name="Andrews T.D."/>
            <person name="Ashwell R.I.S."/>
            <person name="Babbage A.K."/>
            <person name="Bagguley C.L."/>
            <person name="Bailey J."/>
            <person name="Banerjee R."/>
            <person name="Barker D.J."/>
            <person name="Barlow K.F."/>
            <person name="Bates K."/>
            <person name="Beare D.M."/>
            <person name="Beasley H."/>
            <person name="Beasley O."/>
            <person name="Bird C.P."/>
            <person name="Blakey S.E."/>
            <person name="Bray-Allen S."/>
            <person name="Brook J."/>
            <person name="Brown A.J."/>
            <person name="Brown J.Y."/>
            <person name="Burford D.C."/>
            <person name="Burrill W."/>
            <person name="Burton J."/>
            <person name="Carder C."/>
            <person name="Carter N.P."/>
            <person name="Chapman J.C."/>
            <person name="Clark S.Y."/>
            <person name="Clark G."/>
            <person name="Clee C.M."/>
            <person name="Clegg S."/>
            <person name="Cobley V."/>
            <person name="Collier R.E."/>
            <person name="Collins J.E."/>
            <person name="Colman L.K."/>
            <person name="Corby N.R."/>
            <person name="Coville G.J."/>
            <person name="Culley K.M."/>
            <person name="Dhami P."/>
            <person name="Davies J."/>
            <person name="Dunn M."/>
            <person name="Earthrowl M.E."/>
            <person name="Ellington A.E."/>
            <person name="Evans K.A."/>
            <person name="Faulkner L."/>
            <person name="Francis M.D."/>
            <person name="Frankish A."/>
            <person name="Frankland J."/>
            <person name="French L."/>
            <person name="Garner P."/>
            <person name="Garnett J."/>
            <person name="Ghori M.J."/>
            <person name="Gilby L.M."/>
            <person name="Gillson C.J."/>
            <person name="Glithero R.J."/>
            <person name="Grafham D.V."/>
            <person name="Grant M."/>
            <person name="Gribble S."/>
            <person name="Griffiths C."/>
            <person name="Griffiths M.N.D."/>
            <person name="Hall R."/>
            <person name="Halls K.S."/>
            <person name="Hammond S."/>
            <person name="Harley J.L."/>
            <person name="Hart E.A."/>
            <person name="Heath P.D."/>
            <person name="Heathcott R."/>
            <person name="Holmes S.J."/>
            <person name="Howden P.J."/>
            <person name="Howe K.L."/>
            <person name="Howell G.R."/>
            <person name="Huckle E."/>
            <person name="Humphray S.J."/>
            <person name="Humphries M.D."/>
            <person name="Hunt A.R."/>
            <person name="Johnson C.M."/>
            <person name="Joy A.A."/>
            <person name="Kay M."/>
            <person name="Keenan S.J."/>
            <person name="Kimberley A.M."/>
            <person name="King A."/>
            <person name="Laird G.K."/>
            <person name="Langford C."/>
            <person name="Lawlor S."/>
            <person name="Leongamornlert D.A."/>
            <person name="Leversha M."/>
            <person name="Lloyd C.R."/>
            <person name="Lloyd D.M."/>
            <person name="Loveland J.E."/>
            <person name="Lovell J."/>
            <person name="Martin S."/>
            <person name="Mashreghi-Mohammadi M."/>
            <person name="Maslen G.L."/>
            <person name="Matthews L."/>
            <person name="McCann O.T."/>
            <person name="McLaren S.J."/>
            <person name="McLay K."/>
            <person name="McMurray A."/>
            <person name="Moore M.J.F."/>
            <person name="Mullikin J.C."/>
            <person name="Niblett D."/>
            <person name="Nickerson T."/>
            <person name="Novik K.L."/>
            <person name="Oliver K."/>
            <person name="Overton-Larty E.K."/>
            <person name="Parker A."/>
            <person name="Patel R."/>
            <person name="Pearce A.V."/>
            <person name="Peck A.I."/>
            <person name="Phillimore B.J.C.T."/>
            <person name="Phillips S."/>
            <person name="Plumb R.W."/>
            <person name="Porter K.M."/>
            <person name="Ramsey Y."/>
            <person name="Ranby S.A."/>
            <person name="Rice C.M."/>
            <person name="Ross M.T."/>
            <person name="Searle S.M."/>
            <person name="Sehra H.K."/>
            <person name="Sheridan E."/>
            <person name="Skuce C.D."/>
            <person name="Smith S."/>
            <person name="Smith M."/>
            <person name="Spraggon L."/>
            <person name="Squares S.L."/>
            <person name="Steward C.A."/>
            <person name="Sycamore N."/>
            <person name="Tamlyn-Hall G."/>
            <person name="Tester J."/>
            <person name="Theaker A.J."/>
            <person name="Thomas D.W."/>
            <person name="Thorpe A."/>
            <person name="Tracey A."/>
            <person name="Tromans A."/>
            <person name="Tubby B."/>
            <person name="Wall M."/>
            <person name="Wallis J.M."/>
            <person name="West A.P."/>
            <person name="White S.S."/>
            <person name="Whitehead S.L."/>
            <person name="Whittaker H."/>
            <person name="Wild A."/>
            <person name="Willey D.J."/>
            <person name="Wilmer T.E."/>
            <person name="Wood J.M."/>
            <person name="Wray P.W."/>
            <person name="Wyatt J.C."/>
            <person name="Young L."/>
            <person name="Younger R.M."/>
            <person name="Bentley D.R."/>
            <person name="Coulson A."/>
            <person name="Durbin R.M."/>
            <person name="Hubbard T."/>
            <person name="Sulston J.E."/>
            <person name="Dunham I."/>
            <person name="Rogers J."/>
            <person name="Beck S."/>
        </authorList>
    </citation>
    <scope>NUCLEOTIDE SEQUENCE [LARGE SCALE GENOMIC DNA]</scope>
</reference>
<reference key="3">
    <citation type="journal article" date="2004" name="Genome Res.">
        <title>The status, quality, and expansion of the NIH full-length cDNA project: the Mammalian Gene Collection (MGC).</title>
        <authorList>
            <consortium name="The MGC Project Team"/>
        </authorList>
    </citation>
    <scope>NUCLEOTIDE SEQUENCE [LARGE SCALE MRNA]</scope>
    <source>
        <tissue>Adrenal cortex</tissue>
        <tissue>Liver</tissue>
    </source>
</reference>
<reference key="4">
    <citation type="journal article" date="1999" name="Mol. Cell">
        <title>Reconstitution of the transcription factor TFIIH: assignment of functions for the three enzymatic subunits, XPB, XPD, and cdk7.</title>
        <authorList>
            <person name="Tirode F."/>
            <person name="Busso D."/>
            <person name="Coin F."/>
            <person name="Egly J.-M."/>
        </authorList>
    </citation>
    <scope>FUNCTION</scope>
    <scope>SUBUNIT</scope>
</reference>
<reference key="5">
    <citation type="journal article" date="2007" name="Science">
        <title>ATM and ATR substrate analysis reveals extensive protein networks responsive to DNA damage.</title>
        <authorList>
            <person name="Matsuoka S."/>
            <person name="Ballif B.A."/>
            <person name="Smogorzewska A."/>
            <person name="McDonald E.R. III"/>
            <person name="Hurov K.E."/>
            <person name="Luo J."/>
            <person name="Bakalarski C.E."/>
            <person name="Zhao Z."/>
            <person name="Solimini N."/>
            <person name="Lerenthal Y."/>
            <person name="Shiloh Y."/>
            <person name="Gygi S.P."/>
            <person name="Elledge S.J."/>
        </authorList>
    </citation>
    <scope>PHOSPHORYLATION [LARGE SCALE ANALYSIS] AT THR-69</scope>
    <scope>IDENTIFICATION BY MASS SPECTROMETRY [LARGE SCALE ANALYSIS]</scope>
    <source>
        <tissue>Embryonic kidney</tissue>
    </source>
</reference>
<reference key="6">
    <citation type="submission" date="2005-02" db="PDB data bank">
        <title>Crystal structure of the human TFIIH.</title>
        <authorList>
            <consortium name="Northeast structural genomics consortium (NESG)"/>
        </authorList>
    </citation>
    <scope>X-RAY CRYSTALLOGRAPHY (2.3 ANGSTROMS) OF 6-71</scope>
</reference>
<reference key="7">
    <citation type="journal article" date="2016" name="Nature">
        <title>Near-atomic resolution visualization of human transcription promoter opening.</title>
        <authorList>
            <person name="He Y."/>
            <person name="Yan C."/>
            <person name="Fang J."/>
            <person name="Inouye C."/>
            <person name="Tjian R."/>
            <person name="Ivanov I."/>
            <person name="Nogales E."/>
        </authorList>
    </citation>
    <scope>STRUCTURE BY ELECTRON MICROSCOPY (3.90 ANGSTROMS) OF TRANSCRIPTION PRE-INITIATION COMPLEX</scope>
    <scope>SUBUNIT</scope>
</reference>
<reference evidence="9" key="8">
    <citation type="journal article" date="2019" name="Nat. Commun.">
        <title>Structural basis of TFIIH activation for nucleotide excision repair.</title>
        <authorList>
            <person name="Kokic G."/>
            <person name="Chernev A."/>
            <person name="Tegunov D."/>
            <person name="Dienemann C."/>
            <person name="Urlaub H."/>
            <person name="Cramer P."/>
        </authorList>
    </citation>
    <scope>STRUCTURE BY ELECTRON MICROSCOPY (3.50 ANGSTROMS) OF NUCLEOTIDE EXCISION REPAIR INTERMEDIATE IN COMPLEX WITH XPA AND DNA SUBSTRATE</scope>
</reference>
<reference evidence="10 11 12 13 14 15" key="9">
    <citation type="journal article" date="2021" name="Nature">
        <title>Structures of mammalian RNA polymerase II pre-initiation complexes.</title>
        <authorList>
            <person name="Aibara S."/>
            <person name="Schilbach S."/>
            <person name="Cramer P."/>
        </authorList>
    </citation>
    <scope>STRUCTURE BY ELECTRON MICROSCOPY (2.90 ANGSTROMS) OF PRE-INITIATION COMPLEXES WITH PIG POLYMERASE II</scope>
</reference>